<gene>
    <name evidence="1" type="primary">mutL</name>
    <name type="ordered locus">OE_1267R</name>
</gene>
<protein>
    <recommendedName>
        <fullName evidence="1">DNA mismatch repair protein MutL</fullName>
    </recommendedName>
</protein>
<accession>B0R2S6</accession>
<sequence length="659" mass="67918">MTDRIRALDDATVARIAAGEVVERPASVVKELVENSLDAGAASVDVSVDAGGTDRIVVADDGRGMTGDDLRMAVRQHTTSKLDDASGLDGVGTLGFRGEALYTIGSVAELTVTTRPRNAGDTGARITVDHGDAGSVAPAGHPAGTTVEVTDLFGETPARRKYLKRAATEFGHVNRAVTRYALANPDVAVSLTHDGREVFATTGTGDVQDAALAVYGREVAQSLRTVDADPAADSVERVHGYVSDPEVTRSTREYLATFVNGRAVTDAVLREAVLDGYGDQLAPDRYPFAVLFVDCEGVDANVHPRKLEVRFEDEAGVKAAVEAGVRDALLDAGLVRAGAPRGASKPGDAEISPEHSPTDRDAGAAGGGDAAGQSDGNGQRTAASGATSESPASAFETGGGDEAADSAASTDGTRERPGSGTESRTGRFDAPAENARLPTGAGGPEADDQDTTSERDSLPDLRVLGQLHDTYVVAEAGDGLVLVDQHAADERVHYERLQARVDGASQALVAPAELELTAGEAAVFEAALGGLRELGFDAELAGRTARVTAVPAVLADALDAELARDVLSSFLADADGTPVADAADAVLADLACSPAIKGNTSLAEGSVVALLDALDACENPYACPHGRPTIVEVDGDELAARFERDYPGHAGRRREDAGN</sequence>
<comment type="function">
    <text evidence="1">This protein is involved in the repair of mismatches in DNA. It is required for dam-dependent methyl-directed DNA mismatch repair. May act as a 'molecular matchmaker', a protein that promotes the formation of a stable complex between two or more DNA-binding proteins in an ATP-dependent manner without itself being part of a final effector complex.</text>
</comment>
<comment type="similarity">
    <text evidence="1">Belongs to the DNA mismatch repair MutL/HexB family.</text>
</comment>
<name>MUTL_HALS3</name>
<organism>
    <name type="scientific">Halobacterium salinarum (strain ATCC 29341 / DSM 671 / R1)</name>
    <dbReference type="NCBI Taxonomy" id="478009"/>
    <lineage>
        <taxon>Archaea</taxon>
        <taxon>Methanobacteriati</taxon>
        <taxon>Methanobacteriota</taxon>
        <taxon>Stenosarchaea group</taxon>
        <taxon>Halobacteria</taxon>
        <taxon>Halobacteriales</taxon>
        <taxon>Halobacteriaceae</taxon>
        <taxon>Halobacterium</taxon>
        <taxon>Halobacterium salinarum NRC-34001</taxon>
    </lineage>
</organism>
<keyword id="KW-0227">DNA damage</keyword>
<keyword id="KW-0234">DNA repair</keyword>
<reference key="1">
    <citation type="journal article" date="2008" name="Genomics">
        <title>Evolution in the laboratory: the genome of Halobacterium salinarum strain R1 compared to that of strain NRC-1.</title>
        <authorList>
            <person name="Pfeiffer F."/>
            <person name="Schuster S.C."/>
            <person name="Broicher A."/>
            <person name="Falb M."/>
            <person name="Palm P."/>
            <person name="Rodewald K."/>
            <person name="Ruepp A."/>
            <person name="Soppa J."/>
            <person name="Tittor J."/>
            <person name="Oesterhelt D."/>
        </authorList>
    </citation>
    <scope>NUCLEOTIDE SEQUENCE [LARGE SCALE GENOMIC DNA]</scope>
    <source>
        <strain>ATCC 29341 / DSM 671 / R1</strain>
    </source>
</reference>
<dbReference type="EMBL" id="AM774415">
    <property type="protein sequence ID" value="CAP13036.1"/>
    <property type="molecule type" value="Genomic_DNA"/>
</dbReference>
<dbReference type="RefSeq" id="WP_010902072.1">
    <property type="nucleotide sequence ID" value="NC_010364.1"/>
</dbReference>
<dbReference type="SMR" id="B0R2S6"/>
<dbReference type="EnsemblBacteria" id="CAP13036">
    <property type="protein sequence ID" value="CAP13036"/>
    <property type="gene ID" value="OE_1267R"/>
</dbReference>
<dbReference type="GeneID" id="68693136"/>
<dbReference type="KEGG" id="hsl:OE_1267R"/>
<dbReference type="HOGENOM" id="CLU_004131_4_1_2"/>
<dbReference type="PhylomeDB" id="B0R2S6"/>
<dbReference type="Proteomes" id="UP000001321">
    <property type="component" value="Chromosome"/>
</dbReference>
<dbReference type="GO" id="GO:0032300">
    <property type="term" value="C:mismatch repair complex"/>
    <property type="evidence" value="ECO:0007669"/>
    <property type="project" value="InterPro"/>
</dbReference>
<dbReference type="GO" id="GO:0005524">
    <property type="term" value="F:ATP binding"/>
    <property type="evidence" value="ECO:0007669"/>
    <property type="project" value="InterPro"/>
</dbReference>
<dbReference type="GO" id="GO:0016887">
    <property type="term" value="F:ATP hydrolysis activity"/>
    <property type="evidence" value="ECO:0007669"/>
    <property type="project" value="InterPro"/>
</dbReference>
<dbReference type="GO" id="GO:0140664">
    <property type="term" value="F:ATP-dependent DNA damage sensor activity"/>
    <property type="evidence" value="ECO:0007669"/>
    <property type="project" value="InterPro"/>
</dbReference>
<dbReference type="GO" id="GO:0030983">
    <property type="term" value="F:mismatched DNA binding"/>
    <property type="evidence" value="ECO:0007669"/>
    <property type="project" value="InterPro"/>
</dbReference>
<dbReference type="GO" id="GO:0006298">
    <property type="term" value="P:mismatch repair"/>
    <property type="evidence" value="ECO:0007669"/>
    <property type="project" value="UniProtKB-UniRule"/>
</dbReference>
<dbReference type="CDD" id="cd16926">
    <property type="entry name" value="HATPase_MutL-MLH-PMS-like"/>
    <property type="match status" value="1"/>
</dbReference>
<dbReference type="CDD" id="cd00782">
    <property type="entry name" value="MutL_Trans"/>
    <property type="match status" value="1"/>
</dbReference>
<dbReference type="FunFam" id="3.30.565.10:FF:000003">
    <property type="entry name" value="DNA mismatch repair endonuclease MutL"/>
    <property type="match status" value="1"/>
</dbReference>
<dbReference type="Gene3D" id="3.30.230.10">
    <property type="match status" value="1"/>
</dbReference>
<dbReference type="Gene3D" id="3.30.565.10">
    <property type="entry name" value="Histidine kinase-like ATPase, C-terminal domain"/>
    <property type="match status" value="1"/>
</dbReference>
<dbReference type="Gene3D" id="3.30.1540.20">
    <property type="entry name" value="MutL, C-terminal domain, dimerisation subdomain"/>
    <property type="match status" value="1"/>
</dbReference>
<dbReference type="Gene3D" id="3.30.1370.100">
    <property type="entry name" value="MutL, C-terminal domain, regulatory subdomain"/>
    <property type="match status" value="1"/>
</dbReference>
<dbReference type="HAMAP" id="MF_00149">
    <property type="entry name" value="DNA_mis_repair"/>
    <property type="match status" value="1"/>
</dbReference>
<dbReference type="InterPro" id="IPR014762">
    <property type="entry name" value="DNA_mismatch_repair_CS"/>
</dbReference>
<dbReference type="InterPro" id="IPR020667">
    <property type="entry name" value="DNA_mismatch_repair_MutL"/>
</dbReference>
<dbReference type="InterPro" id="IPR013507">
    <property type="entry name" value="DNA_mismatch_S5_2-like"/>
</dbReference>
<dbReference type="InterPro" id="IPR036890">
    <property type="entry name" value="HATPase_C_sf"/>
</dbReference>
<dbReference type="InterPro" id="IPR002099">
    <property type="entry name" value="MutL/Mlh/PMS"/>
</dbReference>
<dbReference type="InterPro" id="IPR038973">
    <property type="entry name" value="MutL/Mlh/Pms-like"/>
</dbReference>
<dbReference type="InterPro" id="IPR014790">
    <property type="entry name" value="MutL_C"/>
</dbReference>
<dbReference type="InterPro" id="IPR042120">
    <property type="entry name" value="MutL_C_dimsub"/>
</dbReference>
<dbReference type="InterPro" id="IPR042121">
    <property type="entry name" value="MutL_C_regsub"/>
</dbReference>
<dbReference type="InterPro" id="IPR037198">
    <property type="entry name" value="MutL_C_sf"/>
</dbReference>
<dbReference type="InterPro" id="IPR020568">
    <property type="entry name" value="Ribosomal_Su5_D2-typ_SF"/>
</dbReference>
<dbReference type="InterPro" id="IPR014721">
    <property type="entry name" value="Ribsml_uS5_D2-typ_fold_subgr"/>
</dbReference>
<dbReference type="NCBIfam" id="TIGR00585">
    <property type="entry name" value="mutl"/>
    <property type="match status" value="1"/>
</dbReference>
<dbReference type="PANTHER" id="PTHR10073">
    <property type="entry name" value="DNA MISMATCH REPAIR PROTEIN MLH, PMS, MUTL"/>
    <property type="match status" value="1"/>
</dbReference>
<dbReference type="PANTHER" id="PTHR10073:SF12">
    <property type="entry name" value="DNA MISMATCH REPAIR PROTEIN MLH1"/>
    <property type="match status" value="1"/>
</dbReference>
<dbReference type="Pfam" id="PF01119">
    <property type="entry name" value="DNA_mis_repair"/>
    <property type="match status" value="1"/>
</dbReference>
<dbReference type="Pfam" id="PF13589">
    <property type="entry name" value="HATPase_c_3"/>
    <property type="match status" value="1"/>
</dbReference>
<dbReference type="Pfam" id="PF08676">
    <property type="entry name" value="MutL_C"/>
    <property type="match status" value="1"/>
</dbReference>
<dbReference type="SMART" id="SM01340">
    <property type="entry name" value="DNA_mis_repair"/>
    <property type="match status" value="1"/>
</dbReference>
<dbReference type="SMART" id="SM00853">
    <property type="entry name" value="MutL_C"/>
    <property type="match status" value="1"/>
</dbReference>
<dbReference type="SUPFAM" id="SSF55874">
    <property type="entry name" value="ATPase domain of HSP90 chaperone/DNA topoisomerase II/histidine kinase"/>
    <property type="match status" value="1"/>
</dbReference>
<dbReference type="SUPFAM" id="SSF118116">
    <property type="entry name" value="DNA mismatch repair protein MutL"/>
    <property type="match status" value="1"/>
</dbReference>
<dbReference type="SUPFAM" id="SSF54211">
    <property type="entry name" value="Ribosomal protein S5 domain 2-like"/>
    <property type="match status" value="1"/>
</dbReference>
<dbReference type="PROSITE" id="PS00058">
    <property type="entry name" value="DNA_MISMATCH_REPAIR_1"/>
    <property type="match status" value="1"/>
</dbReference>
<feature type="chain" id="PRO_1000096656" description="DNA mismatch repair protein MutL">
    <location>
        <begin position="1"/>
        <end position="659"/>
    </location>
</feature>
<feature type="region of interest" description="Disordered" evidence="2">
    <location>
        <begin position="338"/>
        <end position="459"/>
    </location>
</feature>
<feature type="compositionally biased region" description="Basic and acidic residues" evidence="2">
    <location>
        <begin position="352"/>
        <end position="362"/>
    </location>
</feature>
<feature type="compositionally biased region" description="Polar residues" evidence="2">
    <location>
        <begin position="374"/>
        <end position="391"/>
    </location>
</feature>
<proteinExistence type="inferred from homology"/>
<evidence type="ECO:0000255" key="1">
    <source>
        <dbReference type="HAMAP-Rule" id="MF_00149"/>
    </source>
</evidence>
<evidence type="ECO:0000256" key="2">
    <source>
        <dbReference type="SAM" id="MobiDB-lite"/>
    </source>
</evidence>